<organism>
    <name type="scientific">Dictyostelium discoideum</name>
    <name type="common">Social amoeba</name>
    <dbReference type="NCBI Taxonomy" id="44689"/>
    <lineage>
        <taxon>Eukaryota</taxon>
        <taxon>Amoebozoa</taxon>
        <taxon>Evosea</taxon>
        <taxon>Eumycetozoa</taxon>
        <taxon>Dictyostelia</taxon>
        <taxon>Dictyosteliales</taxon>
        <taxon>Dictyosteliaceae</taxon>
        <taxon>Dictyostelium</taxon>
    </lineage>
</organism>
<reference key="1">
    <citation type="journal article" date="1994" name="Mol. Biol. Cell">
        <title>Cloning and targeted mutations of G alpha 7 and G alpha 8, two developmentally regulated G protein alpha-subunit genes in Dictyostelium.</title>
        <authorList>
            <person name="Wu L."/>
            <person name="Gaskins C.J."/>
            <person name="Zhou K."/>
            <person name="Firtel R.A."/>
            <person name="Devreotes P.N."/>
        </authorList>
    </citation>
    <scope>NUCLEOTIDE SEQUENCE [MRNA]</scope>
    <source>
        <strain>AX3</strain>
    </source>
</reference>
<reference key="2">
    <citation type="journal article" date="2005" name="Nature">
        <title>The genome of the social amoeba Dictyostelium discoideum.</title>
        <authorList>
            <person name="Eichinger L."/>
            <person name="Pachebat J.A."/>
            <person name="Gloeckner G."/>
            <person name="Rajandream M.A."/>
            <person name="Sucgang R."/>
            <person name="Berriman M."/>
            <person name="Song J."/>
            <person name="Olsen R."/>
            <person name="Szafranski K."/>
            <person name="Xu Q."/>
            <person name="Tunggal B."/>
            <person name="Kummerfeld S."/>
            <person name="Madera M."/>
            <person name="Konfortov B.A."/>
            <person name="Rivero F."/>
            <person name="Bankier A.T."/>
            <person name="Lehmann R."/>
            <person name="Hamlin N."/>
            <person name="Davies R."/>
            <person name="Gaudet P."/>
            <person name="Fey P."/>
            <person name="Pilcher K."/>
            <person name="Chen G."/>
            <person name="Saunders D."/>
            <person name="Sodergren E.J."/>
            <person name="Davis P."/>
            <person name="Kerhornou A."/>
            <person name="Nie X."/>
            <person name="Hall N."/>
            <person name="Anjard C."/>
            <person name="Hemphill L."/>
            <person name="Bason N."/>
            <person name="Farbrother P."/>
            <person name="Desany B."/>
            <person name="Just E."/>
            <person name="Morio T."/>
            <person name="Rost R."/>
            <person name="Churcher C.M."/>
            <person name="Cooper J."/>
            <person name="Haydock S."/>
            <person name="van Driessche N."/>
            <person name="Cronin A."/>
            <person name="Goodhead I."/>
            <person name="Muzny D.M."/>
            <person name="Mourier T."/>
            <person name="Pain A."/>
            <person name="Lu M."/>
            <person name="Harper D."/>
            <person name="Lindsay R."/>
            <person name="Hauser H."/>
            <person name="James K.D."/>
            <person name="Quiles M."/>
            <person name="Madan Babu M."/>
            <person name="Saito T."/>
            <person name="Buchrieser C."/>
            <person name="Wardroper A."/>
            <person name="Felder M."/>
            <person name="Thangavelu M."/>
            <person name="Johnson D."/>
            <person name="Knights A."/>
            <person name="Loulseged H."/>
            <person name="Mungall K.L."/>
            <person name="Oliver K."/>
            <person name="Price C."/>
            <person name="Quail M.A."/>
            <person name="Urushihara H."/>
            <person name="Hernandez J."/>
            <person name="Rabbinowitsch E."/>
            <person name="Steffen D."/>
            <person name="Sanders M."/>
            <person name="Ma J."/>
            <person name="Kohara Y."/>
            <person name="Sharp S."/>
            <person name="Simmonds M.N."/>
            <person name="Spiegler S."/>
            <person name="Tivey A."/>
            <person name="Sugano S."/>
            <person name="White B."/>
            <person name="Walker D."/>
            <person name="Woodward J.R."/>
            <person name="Winckler T."/>
            <person name="Tanaka Y."/>
            <person name="Shaulsky G."/>
            <person name="Schleicher M."/>
            <person name="Weinstock G.M."/>
            <person name="Rosenthal A."/>
            <person name="Cox E.C."/>
            <person name="Chisholm R.L."/>
            <person name="Gibbs R.A."/>
            <person name="Loomis W.F."/>
            <person name="Platzer M."/>
            <person name="Kay R.R."/>
            <person name="Williams J.G."/>
            <person name="Dear P.H."/>
            <person name="Noegel A.A."/>
            <person name="Barrell B.G."/>
            <person name="Kuspa A."/>
        </authorList>
    </citation>
    <scope>NUCLEOTIDE SEQUENCE [LARGE SCALE GENOMIC DNA]</scope>
    <source>
        <strain>AX4</strain>
    </source>
</reference>
<reference key="3">
    <citation type="journal article" date="1991" name="Biochem. Biophys. Res. Commun.">
        <title>Dictyostelium transiently expresses eight distinct G-protein alpha-subunits during its developmental program.</title>
        <authorList>
            <person name="Wu L."/>
            <person name="Devreotes P.N."/>
        </authorList>
    </citation>
    <scope>NUCLEOTIDE SEQUENCE [MRNA] OF 45-198</scope>
    <source>
        <strain>AX3</strain>
    </source>
</reference>
<keyword id="KW-0342">GTP-binding</keyword>
<keyword id="KW-0449">Lipoprotein</keyword>
<keyword id="KW-0460">Magnesium</keyword>
<keyword id="KW-0479">Metal-binding</keyword>
<keyword id="KW-0519">Myristate</keyword>
<keyword id="KW-0547">Nucleotide-binding</keyword>
<keyword id="KW-0564">Palmitate</keyword>
<keyword id="KW-1185">Reference proteome</keyword>
<keyword id="KW-0807">Transducer</keyword>
<comment type="function">
    <text>Guanine nucleotide-binding proteins (G proteins) are involved as modulators or transducers in various transmembrane signaling systems. G alpha-8 is a potential analog for the G(s)-like G-proteins which stimulate adenylate cyclase in mammals.</text>
</comment>
<comment type="subunit">
    <text>G proteins are composed of 3 units; alpha, beta and gamma. The alpha chain contains the guanine nucleotide binding site.</text>
</comment>
<comment type="developmental stage">
    <text>Expressed primarily at the mound stage.</text>
</comment>
<comment type="similarity">
    <text evidence="5">Belongs to the G-alpha family.</text>
</comment>
<gene>
    <name type="primary">gpaH</name>
    <name type="ORF">DDB_G0284469</name>
</gene>
<protein>
    <recommendedName>
        <fullName>Guanine nucleotide-binding protein alpha-8 subunit</fullName>
        <shortName>G alpha-8</shortName>
    </recommendedName>
</protein>
<feature type="initiator methionine" description="Removed" evidence="2">
    <location>
        <position position="1"/>
    </location>
</feature>
<feature type="chain" id="PRO_0000203666" description="Guanine nucleotide-binding protein alpha-8 subunit">
    <location>
        <begin position="2"/>
        <end position="403"/>
    </location>
</feature>
<feature type="domain" description="G-alpha" evidence="3">
    <location>
        <begin position="31"/>
        <end position="356"/>
    </location>
</feature>
<feature type="region of interest" description="G1 motif" evidence="3">
    <location>
        <begin position="34"/>
        <end position="47"/>
    </location>
</feature>
<feature type="region of interest" description="G2 motif" evidence="3">
    <location>
        <begin position="172"/>
        <end position="180"/>
    </location>
</feature>
<feature type="region of interest" description="G3 motif" evidence="3">
    <location>
        <begin position="195"/>
        <end position="204"/>
    </location>
</feature>
<feature type="region of interest" description="G4 motif" evidence="3">
    <location>
        <begin position="264"/>
        <end position="271"/>
    </location>
</feature>
<feature type="region of interest" description="G5 motif" evidence="3">
    <location>
        <begin position="322"/>
        <end position="327"/>
    </location>
</feature>
<feature type="region of interest" description="Disordered" evidence="4">
    <location>
        <begin position="353"/>
        <end position="403"/>
    </location>
</feature>
<feature type="compositionally biased region" description="Low complexity" evidence="4">
    <location>
        <begin position="374"/>
        <end position="389"/>
    </location>
</feature>
<feature type="compositionally biased region" description="Polar residues" evidence="4">
    <location>
        <begin position="390"/>
        <end position="403"/>
    </location>
</feature>
<feature type="binding site" evidence="1">
    <location>
        <begin position="39"/>
        <end position="46"/>
    </location>
    <ligand>
        <name>GTP</name>
        <dbReference type="ChEBI" id="CHEBI:37565"/>
    </ligand>
</feature>
<feature type="binding site" evidence="1">
    <location>
        <position position="46"/>
    </location>
    <ligand>
        <name>Mg(2+)</name>
        <dbReference type="ChEBI" id="CHEBI:18420"/>
    </ligand>
</feature>
<feature type="binding site" evidence="1">
    <location>
        <begin position="174"/>
        <end position="180"/>
    </location>
    <ligand>
        <name>GTP</name>
        <dbReference type="ChEBI" id="CHEBI:37565"/>
    </ligand>
</feature>
<feature type="binding site" evidence="1">
    <location>
        <position position="180"/>
    </location>
    <ligand>
        <name>Mg(2+)</name>
        <dbReference type="ChEBI" id="CHEBI:18420"/>
    </ligand>
</feature>
<feature type="binding site" evidence="1">
    <location>
        <begin position="199"/>
        <end position="203"/>
    </location>
    <ligand>
        <name>GTP</name>
        <dbReference type="ChEBI" id="CHEBI:37565"/>
    </ligand>
</feature>
<feature type="binding site" evidence="1">
    <location>
        <begin position="268"/>
        <end position="271"/>
    </location>
    <ligand>
        <name>GTP</name>
        <dbReference type="ChEBI" id="CHEBI:37565"/>
    </ligand>
</feature>
<feature type="binding site" evidence="1">
    <location>
        <position position="324"/>
    </location>
    <ligand>
        <name>GTP</name>
        <dbReference type="ChEBI" id="CHEBI:37565"/>
    </ligand>
</feature>
<feature type="lipid moiety-binding region" description="N-myristoyl glycine" evidence="2">
    <location>
        <position position="2"/>
    </location>
</feature>
<feature type="lipid moiety-binding region" description="S-palmitoyl cysteine" evidence="2">
    <location>
        <position position="3"/>
    </location>
</feature>
<feature type="sequence conflict" description="In Ref. 3." evidence="5" ref="3">
    <location>
        <begin position="125"/>
        <end position="128"/>
    </location>
</feature>
<feature type="sequence conflict" description="In Ref. 3." evidence="5" ref="3">
    <original>K</original>
    <variation>E</variation>
    <location>
        <position position="137"/>
    </location>
</feature>
<evidence type="ECO:0000250" key="1"/>
<evidence type="ECO:0000255" key="2"/>
<evidence type="ECO:0000255" key="3">
    <source>
        <dbReference type="PROSITE-ProRule" id="PRU01230"/>
    </source>
</evidence>
<evidence type="ECO:0000256" key="4">
    <source>
        <dbReference type="SAM" id="MobiDB-lite"/>
    </source>
</evidence>
<evidence type="ECO:0000305" key="5"/>
<accession>P34046</accession>
<accession>Q54PH7</accession>
<dbReference type="EMBL" id="L33848">
    <property type="protein sequence ID" value="AAA67424.1"/>
    <property type="molecule type" value="mRNA"/>
</dbReference>
<dbReference type="EMBL" id="AAFI02000066">
    <property type="protein sequence ID" value="EAL65161.1"/>
    <property type="molecule type" value="Genomic_DNA"/>
</dbReference>
<dbReference type="RefSeq" id="XP_638555.1">
    <property type="nucleotide sequence ID" value="XM_633463.1"/>
</dbReference>
<dbReference type="SMR" id="P34046"/>
<dbReference type="FunCoup" id="P34046">
    <property type="interactions" value="3"/>
</dbReference>
<dbReference type="STRING" id="44689.P34046"/>
<dbReference type="PaxDb" id="44689-DDB0219991"/>
<dbReference type="EnsemblProtists" id="EAL65161">
    <property type="protein sequence ID" value="EAL65161"/>
    <property type="gene ID" value="DDB_G0284469"/>
</dbReference>
<dbReference type="GeneID" id="8624648"/>
<dbReference type="KEGG" id="ddi:DDB_G0284469"/>
<dbReference type="dictyBase" id="DDB_G0284469">
    <property type="gene designation" value="gpaH"/>
</dbReference>
<dbReference type="VEuPathDB" id="AmoebaDB:DDB_G0284469"/>
<dbReference type="eggNOG" id="KOG0082">
    <property type="taxonomic scope" value="Eukaryota"/>
</dbReference>
<dbReference type="HOGENOM" id="CLU_014184_6_0_1"/>
<dbReference type="InParanoid" id="P34046"/>
<dbReference type="OMA" id="DDIVFRM"/>
<dbReference type="PhylomeDB" id="P34046"/>
<dbReference type="Reactome" id="R-DDI-112043">
    <property type="pathway name" value="PLC beta mediated events"/>
</dbReference>
<dbReference type="Reactome" id="R-DDI-170660">
    <property type="pathway name" value="Adenylate cyclase activating pathway"/>
</dbReference>
<dbReference type="Reactome" id="R-DDI-170670">
    <property type="pathway name" value="Adenylate cyclase inhibitory pathway"/>
</dbReference>
<dbReference type="Reactome" id="R-DDI-202040">
    <property type="pathway name" value="G-protein activation"/>
</dbReference>
<dbReference type="Reactome" id="R-DDI-399997">
    <property type="pathway name" value="Acetylcholine regulates insulin secretion"/>
</dbReference>
<dbReference type="Reactome" id="R-DDI-416476">
    <property type="pathway name" value="G alpha (q) signalling events"/>
</dbReference>
<dbReference type="Reactome" id="R-DDI-416482">
    <property type="pathway name" value="G alpha (12/13) signalling events"/>
</dbReference>
<dbReference type="Reactome" id="R-DDI-418592">
    <property type="pathway name" value="ADP signalling through P2Y purinoceptor 1"/>
</dbReference>
<dbReference type="Reactome" id="R-DDI-434316">
    <property type="pathway name" value="Fatty Acids bound to GPR40 (FFAR1) regulate insulin secretion"/>
</dbReference>
<dbReference type="Reactome" id="R-DDI-9013148">
    <property type="pathway name" value="CDC42 GTPase cycle"/>
</dbReference>
<dbReference type="Reactome" id="R-DDI-9013149">
    <property type="pathway name" value="RAC1 GTPase cycle"/>
</dbReference>
<dbReference type="Reactome" id="R-DDI-9856530">
    <property type="pathway name" value="High laminar flow shear stress activates signaling by PIEZO1 and PECAM1:CDH5:KDR in endothelial cells"/>
</dbReference>
<dbReference type="PRO" id="PR:P34046"/>
<dbReference type="Proteomes" id="UP000002195">
    <property type="component" value="Chromosome 4"/>
</dbReference>
<dbReference type="GO" id="GO:0005737">
    <property type="term" value="C:cytoplasm"/>
    <property type="evidence" value="ECO:0000318"/>
    <property type="project" value="GO_Central"/>
</dbReference>
<dbReference type="GO" id="GO:0005834">
    <property type="term" value="C:heterotrimeric G-protein complex"/>
    <property type="evidence" value="ECO:0000318"/>
    <property type="project" value="GO_Central"/>
</dbReference>
<dbReference type="GO" id="GO:0005886">
    <property type="term" value="C:plasma membrane"/>
    <property type="evidence" value="ECO:0000314"/>
    <property type="project" value="dictyBase"/>
</dbReference>
<dbReference type="GO" id="GO:0140985">
    <property type="term" value="F:G protein-coupled chemorepellent receptor activity"/>
    <property type="evidence" value="ECO:0000314"/>
    <property type="project" value="dictyBase"/>
</dbReference>
<dbReference type="GO" id="GO:0001664">
    <property type="term" value="F:G protein-coupled receptor binding"/>
    <property type="evidence" value="ECO:0000318"/>
    <property type="project" value="GO_Central"/>
</dbReference>
<dbReference type="GO" id="GO:0031683">
    <property type="term" value="F:G-protein beta/gamma-subunit complex binding"/>
    <property type="evidence" value="ECO:0000318"/>
    <property type="project" value="GO_Central"/>
</dbReference>
<dbReference type="GO" id="GO:0005525">
    <property type="term" value="F:GTP binding"/>
    <property type="evidence" value="ECO:0007669"/>
    <property type="project" value="UniProtKB-KW"/>
</dbReference>
<dbReference type="GO" id="GO:0003924">
    <property type="term" value="F:GTPase activity"/>
    <property type="evidence" value="ECO:0000318"/>
    <property type="project" value="GO_Central"/>
</dbReference>
<dbReference type="GO" id="GO:0046872">
    <property type="term" value="F:metal ion binding"/>
    <property type="evidence" value="ECO:0007669"/>
    <property type="project" value="UniProtKB-KW"/>
</dbReference>
<dbReference type="GO" id="GO:0007188">
    <property type="term" value="P:adenylate cyclase-modulating G protein-coupled receptor signaling pathway"/>
    <property type="evidence" value="ECO:0000318"/>
    <property type="project" value="GO_Central"/>
</dbReference>
<dbReference type="GO" id="GO:0140986">
    <property type="term" value="P:G protein-coupled chemorepellent receptor signaling pathway"/>
    <property type="evidence" value="ECO:0000314"/>
    <property type="project" value="dictyBase"/>
</dbReference>
<dbReference type="GO" id="GO:1903665">
    <property type="term" value="P:negative regulation of asexual reproduction"/>
    <property type="evidence" value="ECO:0000315"/>
    <property type="project" value="dictyBase"/>
</dbReference>
<dbReference type="GO" id="GO:0022409">
    <property type="term" value="P:positive regulation of cell-cell adhesion"/>
    <property type="evidence" value="ECO:0000315"/>
    <property type="project" value="dictyBase"/>
</dbReference>
<dbReference type="GO" id="GO:0010811">
    <property type="term" value="P:positive regulation of cell-substrate adhesion"/>
    <property type="evidence" value="ECO:0000315"/>
    <property type="project" value="dictyBase"/>
</dbReference>
<dbReference type="GO" id="GO:0043938">
    <property type="term" value="P:positive regulation of sporulation"/>
    <property type="evidence" value="ECO:0000315"/>
    <property type="project" value="dictyBase"/>
</dbReference>
<dbReference type="GO" id="GO:0045595">
    <property type="term" value="P:regulation of cell differentiation"/>
    <property type="evidence" value="ECO:0000315"/>
    <property type="project" value="dictyBase"/>
</dbReference>
<dbReference type="CDD" id="cd00066">
    <property type="entry name" value="G-alpha"/>
    <property type="match status" value="1"/>
</dbReference>
<dbReference type="FunFam" id="1.10.400.10:FF:000030">
    <property type="entry name" value="Guanine nucleotide-binding protein alpha-8 subunit"/>
    <property type="match status" value="1"/>
</dbReference>
<dbReference type="FunFam" id="3.40.50.300:FF:000181">
    <property type="entry name" value="Guanine nucleotide-binding protein subunit alpha"/>
    <property type="match status" value="1"/>
</dbReference>
<dbReference type="Gene3D" id="1.10.400.10">
    <property type="entry name" value="GI Alpha 1, domain 2-like"/>
    <property type="match status" value="1"/>
</dbReference>
<dbReference type="Gene3D" id="3.40.50.300">
    <property type="entry name" value="P-loop containing nucleotide triphosphate hydrolases"/>
    <property type="match status" value="1"/>
</dbReference>
<dbReference type="InterPro" id="IPR001019">
    <property type="entry name" value="Gprotein_alpha_su"/>
</dbReference>
<dbReference type="InterPro" id="IPR011025">
    <property type="entry name" value="GproteinA_insert"/>
</dbReference>
<dbReference type="InterPro" id="IPR027417">
    <property type="entry name" value="P-loop_NTPase"/>
</dbReference>
<dbReference type="PANTHER" id="PTHR10218">
    <property type="entry name" value="GTP-BINDING PROTEIN ALPHA SUBUNIT"/>
    <property type="match status" value="1"/>
</dbReference>
<dbReference type="PANTHER" id="PTHR10218:SF193">
    <property type="entry name" value="GUANINE NUCLEOTIDE-BINDING PROTEIN ALPHA-8 SUBUNIT"/>
    <property type="match status" value="1"/>
</dbReference>
<dbReference type="Pfam" id="PF00503">
    <property type="entry name" value="G-alpha"/>
    <property type="match status" value="1"/>
</dbReference>
<dbReference type="PRINTS" id="PR00318">
    <property type="entry name" value="GPROTEINA"/>
</dbReference>
<dbReference type="SMART" id="SM00275">
    <property type="entry name" value="G_alpha"/>
    <property type="match status" value="1"/>
</dbReference>
<dbReference type="SUPFAM" id="SSF52540">
    <property type="entry name" value="P-loop containing nucleoside triphosphate hydrolases"/>
    <property type="match status" value="1"/>
</dbReference>
<dbReference type="SUPFAM" id="SSF47895">
    <property type="entry name" value="Transducin (alpha subunit), insertion domain"/>
    <property type="match status" value="1"/>
</dbReference>
<dbReference type="PROSITE" id="PS51882">
    <property type="entry name" value="G_ALPHA"/>
    <property type="match status" value="1"/>
</dbReference>
<proteinExistence type="evidence at transcript level"/>
<name>GPA8_DICDI</name>
<sequence length="403" mass="46312">MGCYQSRVQVEDKTNEQLDKYLVQAGKEGLLDFRILLLGAGESGKSTVVKQLKSIYKIQVDDDELHSYAVNIHKNTVLCMQVLLEAGETLGIELTDPETKKRAINVKSFQFEPEVKQMPVSIGLDIEELWRDEDIQKIWDRRSEYWFLDATPYYFENIQRFLDDDFVPTEEDCIMTRVRTTGISVTEFDEGPVHFRVVDVGGQRNERKKWIHCFDDVKALLFVVNLAGYDQVMFEDPSQNRMQESLTLFGQICNNPIFSETPTFLVLNKKDLFEQMIQKTDLSKCFPDYKGGSDVKTALEFIQMKYQQKIQESNKPLHTFHIAARYKKDIKYTWEEAKGILLEENKKVLMKATKDLKKSSKQSSKSSLGNSTQNNSNNNNNNNNSNNNNGQTTIDGATAKINS</sequence>